<keyword id="KW-0175">Coiled coil</keyword>
<keyword id="KW-0256">Endoplasmic reticulum</keyword>
<keyword id="KW-0931">ER-Golgi transport</keyword>
<keyword id="KW-0333">Golgi apparatus</keyword>
<keyword id="KW-0472">Membrane</keyword>
<keyword id="KW-0653">Protein transport</keyword>
<keyword id="KW-1185">Reference proteome</keyword>
<keyword id="KW-0812">Transmembrane</keyword>
<keyword id="KW-1133">Transmembrane helix</keyword>
<keyword id="KW-0813">Transport</keyword>
<dbReference type="EMBL" id="CR857618">
    <property type="protein sequence ID" value="CAH89893.1"/>
    <property type="molecule type" value="mRNA"/>
</dbReference>
<dbReference type="RefSeq" id="NP_001124885.1">
    <property type="nucleotide sequence ID" value="NM_001131413.1"/>
</dbReference>
<dbReference type="SMR" id="Q5REB4"/>
<dbReference type="FunCoup" id="Q5REB4">
    <property type="interactions" value="2712"/>
</dbReference>
<dbReference type="STRING" id="9601.ENSPPYP00000016308"/>
<dbReference type="GeneID" id="100441033"/>
<dbReference type="KEGG" id="pon:100441033"/>
<dbReference type="CTD" id="53407"/>
<dbReference type="eggNOG" id="KOG3894">
    <property type="taxonomic scope" value="Eukaryota"/>
</dbReference>
<dbReference type="InParanoid" id="Q5REB4"/>
<dbReference type="OrthoDB" id="342981at2759"/>
<dbReference type="Proteomes" id="UP000001595">
    <property type="component" value="Unplaced"/>
</dbReference>
<dbReference type="GO" id="GO:0005789">
    <property type="term" value="C:endoplasmic reticulum membrane"/>
    <property type="evidence" value="ECO:0007669"/>
    <property type="project" value="UniProtKB-SubCell"/>
</dbReference>
<dbReference type="GO" id="GO:0000139">
    <property type="term" value="C:Golgi membrane"/>
    <property type="evidence" value="ECO:0007669"/>
    <property type="project" value="UniProtKB-SubCell"/>
</dbReference>
<dbReference type="GO" id="GO:0031201">
    <property type="term" value="C:SNARE complex"/>
    <property type="evidence" value="ECO:0007669"/>
    <property type="project" value="TreeGrafter"/>
</dbReference>
<dbReference type="GO" id="GO:0005484">
    <property type="term" value="F:SNAP receptor activity"/>
    <property type="evidence" value="ECO:0007669"/>
    <property type="project" value="InterPro"/>
</dbReference>
<dbReference type="GO" id="GO:0006886">
    <property type="term" value="P:intracellular protein transport"/>
    <property type="evidence" value="ECO:0007669"/>
    <property type="project" value="InterPro"/>
</dbReference>
<dbReference type="GO" id="GO:0006890">
    <property type="term" value="P:retrograde vesicle-mediated transport, Golgi to endoplasmic reticulum"/>
    <property type="evidence" value="ECO:0007669"/>
    <property type="project" value="TreeGrafter"/>
</dbReference>
<dbReference type="CDD" id="cd15850">
    <property type="entry name" value="SNARE_syntaxin18"/>
    <property type="match status" value="1"/>
</dbReference>
<dbReference type="FunFam" id="1.20.5.110:FF:000015">
    <property type="entry name" value="Syntaxin-18, putative"/>
    <property type="match status" value="1"/>
</dbReference>
<dbReference type="Gene3D" id="1.20.5.110">
    <property type="match status" value="1"/>
</dbReference>
<dbReference type="InterPro" id="IPR019529">
    <property type="entry name" value="Syntaxin-18_N"/>
</dbReference>
<dbReference type="InterPro" id="IPR006012">
    <property type="entry name" value="Syntaxin/epimorphin_CS"/>
</dbReference>
<dbReference type="PANTHER" id="PTHR15959">
    <property type="entry name" value="SYNTAXIN-18"/>
    <property type="match status" value="1"/>
</dbReference>
<dbReference type="PANTHER" id="PTHR15959:SF1">
    <property type="entry name" value="SYNTAXIN-18"/>
    <property type="match status" value="1"/>
</dbReference>
<dbReference type="Pfam" id="PF10496">
    <property type="entry name" value="Syntaxin-18_N"/>
    <property type="match status" value="1"/>
</dbReference>
<dbReference type="SUPFAM" id="SSF58038">
    <property type="entry name" value="SNARE fusion complex"/>
    <property type="match status" value="1"/>
</dbReference>
<dbReference type="PROSITE" id="PS00914">
    <property type="entry name" value="SYNTAXIN"/>
    <property type="match status" value="1"/>
</dbReference>
<proteinExistence type="evidence at transcript level"/>
<evidence type="ECO:0000250" key="1"/>
<evidence type="ECO:0000255" key="2"/>
<evidence type="ECO:0000256" key="3">
    <source>
        <dbReference type="SAM" id="MobiDB-lite"/>
    </source>
</evidence>
<evidence type="ECO:0000305" key="4"/>
<organism>
    <name type="scientific">Pongo abelii</name>
    <name type="common">Sumatran orangutan</name>
    <name type="synonym">Pongo pygmaeus abelii</name>
    <dbReference type="NCBI Taxonomy" id="9601"/>
    <lineage>
        <taxon>Eukaryota</taxon>
        <taxon>Metazoa</taxon>
        <taxon>Chordata</taxon>
        <taxon>Craniata</taxon>
        <taxon>Vertebrata</taxon>
        <taxon>Euteleostomi</taxon>
        <taxon>Mammalia</taxon>
        <taxon>Eutheria</taxon>
        <taxon>Euarchontoglires</taxon>
        <taxon>Primates</taxon>
        <taxon>Haplorrhini</taxon>
        <taxon>Catarrhini</taxon>
        <taxon>Hominidae</taxon>
        <taxon>Pongo</taxon>
    </lineage>
</organism>
<accession>Q5REB4</accession>
<gene>
    <name type="primary">STX18</name>
</gene>
<protein>
    <recommendedName>
        <fullName>Syntaxin-18</fullName>
    </recommendedName>
</protein>
<reference key="1">
    <citation type="submission" date="2004-11" db="EMBL/GenBank/DDBJ databases">
        <authorList>
            <consortium name="The German cDNA consortium"/>
        </authorList>
    </citation>
    <scope>NUCLEOTIDE SEQUENCE [LARGE SCALE MRNA]</scope>
    <source>
        <tissue>Brain cortex</tissue>
    </source>
</reference>
<feature type="chain" id="PRO_0000210233" description="Syntaxin-18">
    <location>
        <begin position="1"/>
        <end position="335"/>
    </location>
</feature>
<feature type="topological domain" description="Cytoplasmic" evidence="2">
    <location>
        <begin position="1"/>
        <end position="309"/>
    </location>
</feature>
<feature type="transmembrane region" description="Helical; Anchor for type IV membrane protein" evidence="2">
    <location>
        <begin position="310"/>
        <end position="330"/>
    </location>
</feature>
<feature type="topological domain" description="Vesicular" evidence="2">
    <location>
        <begin position="331"/>
        <end position="335"/>
    </location>
</feature>
<feature type="domain" description="t-SNARE coiled-coil homology">
    <location>
        <begin position="243"/>
        <end position="305"/>
    </location>
</feature>
<feature type="region of interest" description="Disordered" evidence="3">
    <location>
        <begin position="168"/>
        <end position="226"/>
    </location>
</feature>
<feature type="compositionally biased region" description="Basic and acidic residues" evidence="3">
    <location>
        <begin position="168"/>
        <end position="208"/>
    </location>
</feature>
<name>STX18_PONAB</name>
<comment type="function">
    <text evidence="1">Syntaxin that may be involved in targeting and fusion of Golgi-derived retrograde transport vesicles with the ER.</text>
</comment>
<comment type="subunit">
    <text evidence="1">Component of a SNARE complex consisting of STX18, USE1L, BNIP1/SEC20L, and SEC22B. RINT1/TIP20L and ZW10 are associated with the complex through interaction with BNIP1/SEC20L. Interacts directly with USE1L and BNIP1/SEC20L (By similarity).</text>
</comment>
<comment type="subcellular location">
    <subcellularLocation>
        <location evidence="1">Endoplasmic reticulum membrane</location>
        <topology evidence="1">Single-pass type IV membrane protein</topology>
    </subcellularLocation>
    <subcellularLocation>
        <location evidence="4">Golgi apparatus membrane</location>
        <topology evidence="4">Single-pass type IV membrane protein</topology>
    </subcellularLocation>
</comment>
<comment type="similarity">
    <text evidence="4">Belongs to the syntaxin family.</text>
</comment>
<sequence length="335" mass="38702">MAVDITLLFRASVKTVKTRNKALGVAVGGGVDGSRDELFRRSPRPKGDFSSRAREVISHIGKLRDFLLEHRKDYINAYSHTMSEYGRMTDTERDQIDQDAQIFMRTCSEAIQQLRTEAHKEIHSQQVKEHRTAVLDFIEDYLKRVCKLYSEQRAIRVKRVVDKKRLSKLEPEPNTKTRESTSSEKVSRSPSKDSEENPATEERPEKILAETQPELGTWGDGKGEDELSPEEIQMFEQENQRLIGEMNSLFDEVRQIEGRVVEISRLQEIFTEKVLQQEAEIDSIHQLVVGATENIKEGNEDIREAIKNNAGFRVWILFFLVMCSFSLLFLDWYDS</sequence>